<reference key="1">
    <citation type="journal article" date="1995" name="Science">
        <title>Cloning of immunoglobulin-superfamily members associated with HLA-C and HLA-B recognition by human natural killer cells.</title>
        <authorList>
            <person name="Colonna M."/>
            <person name="Samaridis J."/>
        </authorList>
    </citation>
    <scope>NUCLEOTIDE SEQUENCE [MRNA] (ISOFORM 1)</scope>
    <source>
        <tissue>Natural killer cell</tissue>
    </source>
</reference>
<reference key="2">
    <citation type="journal article" date="1995" name="Immunity">
        <title>Killer cell inhibitory receptors specific for HLA-C and HLA-B identified by direct binding and by functional transfer.</title>
        <authorList>
            <person name="Wagtmann N."/>
            <person name="Rajagopalan S."/>
            <person name="Winter C.C."/>
            <person name="Peruzzi M."/>
            <person name="Long E.O."/>
        </authorList>
    </citation>
    <scope>NUCLEOTIDE SEQUENCE [MRNA] (ISOFORM 1)</scope>
    <source>
        <tissue>Peripheral blood lymphocyte</tissue>
    </source>
</reference>
<reference key="3">
    <citation type="journal article" date="1996" name="J. Exp. Med.">
        <title>The natural killer cell receptor specific for HLA-A allotypes: a novel member of the p58/p70 family of inhibitory receptors that is characterized by three immunoglobulin-like domains and is expressed as a 140-kD disulphide-linked dimer.</title>
        <authorList>
            <person name="Pende D."/>
            <person name="Biassoni R."/>
            <person name="Cantoni C."/>
            <person name="Verdiani S."/>
            <person name="Falco M."/>
            <person name="di Donato C."/>
            <person name="Accame L."/>
            <person name="Bottino C."/>
            <person name="Moretta A."/>
            <person name="Moretta L."/>
        </authorList>
    </citation>
    <scope>NUCLEOTIDE SEQUENCE [MRNA] (ISOFORMS 1 AND 2)</scope>
    <scope>VARIANTS ALA-40; VAL-113; ASP-158 AND HIS-166</scope>
    <source>
        <tissue>Lymphoid tissue</tissue>
    </source>
</reference>
<reference key="4">
    <citation type="journal article" date="1996" name="Immunogenetics">
        <title>Alternatively spliced forms of human killer inhibitory receptors.</title>
        <authorList>
            <person name="Doehring C."/>
            <person name="Samaridis J."/>
            <person name="Colonna M."/>
        </authorList>
    </citation>
    <scope>NUCLEOTIDE SEQUENCE [MRNA] (ISOFORM 1)</scope>
</reference>
<reference key="5">
    <citation type="submission" date="2004-10" db="EMBL/GenBank/DDBJ databases">
        <title>Variants of KIR identified in Japanese donors.</title>
        <authorList>
            <person name="Yawata N."/>
            <person name="Yawata M."/>
            <person name="Parham P."/>
        </authorList>
    </citation>
    <scope>NUCLEOTIDE SEQUENCE [MRNA] (ISOFORM 1)</scope>
    <scope>VARIANT ASP-158</scope>
</reference>
<reference key="6">
    <citation type="journal article" date="2013" name="J. Immunol.">
        <title>HLA-F and MHC class I open conformers are ligands for NK cell Ig-like receptors.</title>
        <authorList>
            <person name="Goodridge J.P."/>
            <person name="Burian A."/>
            <person name="Lee N."/>
            <person name="Geraghty D.E."/>
        </authorList>
    </citation>
    <scope>FUNCTION</scope>
    <scope>SUBUNIT</scope>
    <scope>INTERACTION WITH HLA-F</scope>
</reference>
<reference key="7">
    <citation type="journal article" date="2016" name="Nat. Med.">
        <title>Major histocompatibility complex class I molecules protect motor neurons from astrocyte-induced toxicity in amyotrophic lateral sclerosis.</title>
        <authorList>
            <person name="Song S."/>
            <person name="Miranda C.J."/>
            <person name="Braun L."/>
            <person name="Meyer K."/>
            <person name="Frakes A.E."/>
            <person name="Ferraiuolo L."/>
            <person name="Likhite S."/>
            <person name="Bevan A.K."/>
            <person name="Foust K.D."/>
            <person name="McConnell M.J."/>
            <person name="Walker C.M."/>
            <person name="Kaspar B.K."/>
        </authorList>
    </citation>
    <scope>FUNCTION</scope>
    <scope>TISSUE SPECIFICITY</scope>
</reference>
<reference key="8">
    <citation type="journal article" date="2017" name="Immunity">
        <title>Human Leukocyte Antigen F Presents Peptides and Regulates Immunity through Interactions with NK Cell Receptors.</title>
        <authorList>
            <person name="Dulberger C.L."/>
            <person name="McMurtrey C.P."/>
            <person name="Holzemer A."/>
            <person name="Neu K.E."/>
            <person name="Liu V."/>
            <person name="Steinbach A.M."/>
            <person name="Garcia-Beltran W.F."/>
            <person name="Sulak M."/>
            <person name="Jabri B."/>
            <person name="Lynch V.J."/>
            <person name="Altfeld M."/>
            <person name="Hildebrand W.H."/>
            <person name="Adams E.J."/>
        </authorList>
    </citation>
    <scope>FUNCTION</scope>
    <scope>SUBUNIT</scope>
    <scope>INTERACTION WITH HLA-F</scope>
</reference>
<reference key="9">
    <citation type="journal article" date="1997" name="Immunity">
        <title>Human diversity in killer cell inhibitory receptor genes.</title>
        <authorList>
            <person name="Uhrberg M."/>
            <person name="Valiante N.M."/>
            <person name="Shum B.P."/>
            <person name="Shilling H.G."/>
            <person name="Lienert-Weidenbach K."/>
            <person name="Corliss B."/>
            <person name="Tyan D."/>
            <person name="Lanier L.L."/>
            <person name="Parham P."/>
        </authorList>
    </citation>
    <scope>VARIANTS ALA-40; VAL-113; ASP-158; HIS-166; PRO-228 AND THR-252</scope>
</reference>
<name>KI3L2_HUMAN</name>
<comment type="function">
    <text evidence="4 5 6">Receptor on natural killer (NK) cells and T cells for MHC class I molecules (PubMed:24018270, PubMed:28636952). Upon binding of peptide-free HLA-F open conformer, negatively regulates NK and T cell effector functions (PubMed:24018270). Acts as a receptor on astrocytes for HLA-F. Through interaction with HLA-F, may protect motor neurons from astrocyte-induced toxicity (PubMed:26928464).</text>
</comment>
<comment type="subunit">
    <text evidence="4 6">Interacts with peptide-free HLA-F open conformer.</text>
</comment>
<comment type="interaction">
    <interactant intactId="EBI-6165894">
        <id>P43630</id>
    </interactant>
    <interactant intactId="EBI-2811134">
        <id>P30511</id>
        <label>HLA-F</label>
    </interactant>
    <organismsDiffer>false</organismsDiffer>
    <experiments>6</experiments>
</comment>
<comment type="subcellular location">
    <subcellularLocation>
        <location>Cell membrane</location>
        <topology>Single-pass type I membrane protein</topology>
    </subcellularLocation>
</comment>
<comment type="alternative products">
    <event type="alternative splicing"/>
    <isoform>
        <id>P43630-1</id>
        <name>1</name>
        <sequence type="displayed"/>
    </isoform>
    <isoform>
        <id>P43630-2</id>
        <name>2</name>
        <sequence type="described" ref="VSP_047374"/>
    </isoform>
</comment>
<comment type="tissue specificity">
    <text evidence="5">Expressed in astrocytes.</text>
</comment>
<comment type="similarity">
    <text evidence="12">Belongs to the immunoglobulin superfamily.</text>
</comment>
<organism>
    <name type="scientific">Homo sapiens</name>
    <name type="common">Human</name>
    <dbReference type="NCBI Taxonomy" id="9606"/>
    <lineage>
        <taxon>Eukaryota</taxon>
        <taxon>Metazoa</taxon>
        <taxon>Chordata</taxon>
        <taxon>Craniata</taxon>
        <taxon>Vertebrata</taxon>
        <taxon>Euteleostomi</taxon>
        <taxon>Mammalia</taxon>
        <taxon>Eutheria</taxon>
        <taxon>Euarchontoglires</taxon>
        <taxon>Primates</taxon>
        <taxon>Haplorrhini</taxon>
        <taxon>Catarrhini</taxon>
        <taxon>Hominidae</taxon>
        <taxon>Homo</taxon>
    </lineage>
</organism>
<sequence>MSLTVVSMACVGFFLLQGAWPLMGGQDKPFLSARPSTVVPRGGHVALQCHYRRGFNNFMLYKEDRSHVPIFHGRIFQESFIMGPVTPAHAGTYRCRGSRPHSLTGWSAPSNPLVIMVTGNHRKPSLLAHPGPLLKSGETVILQCWSDVMFEHFFLHREGISEDPSRLVGQIHDGVSKANFSIGPLMPVLAGTYRCYGSVPHSPYQLSAPSDPLDIVITGLYEKPSLSAQPGPTVQAGENVTLSCSSWSSYDIYHLSREGEAHERRLRAVPKVNRTFQADFPLGPATHGGTYRCFGSFRALPCVWSNSSDPLLVSVTGNPSSSWPSPTEPSSKSGICRHLHVLIGTSVVIFLFILLLFFLLYRWCSNKKNAAVMDQEPAGDRTVNRQDSDEQDPQEVTYAQLDHCVFIQRKISRPSQRPKTPLTDTSVYTELPNAEPRSKVVSCPRAPQSGLEGVF</sequence>
<protein>
    <recommendedName>
        <fullName evidence="12">Killer cell immunoglobulin-like receptor 3DL2</fullName>
    </recommendedName>
    <alternativeName>
        <fullName>CD158 antigen-like family member K</fullName>
    </alternativeName>
    <alternativeName>
        <fullName>Natural killer-associated transcript 4</fullName>
        <shortName>NKAT-4</shortName>
    </alternativeName>
    <alternativeName>
        <fullName>p70 natural killer cell receptor clone CL-5</fullName>
        <shortName>p70 NK receptor CL-5</shortName>
    </alternativeName>
    <cdAntigenName>CD158k</cdAntigenName>
</protein>
<accession>P43630</accession>
<accession>Q13238</accession>
<accession>Q14947</accession>
<accession>Q14948</accession>
<accession>Q92684</accession>
<accession>Q95366</accession>
<accession>Q95367</accession>
<accession>Q95368</accession>
<feature type="signal peptide" evidence="1">
    <location>
        <begin position="1"/>
        <end position="21"/>
    </location>
</feature>
<feature type="chain" id="PRO_0000015090" description="Killer cell immunoglobulin-like receptor 3DL2">
    <location>
        <begin position="22"/>
        <end position="455"/>
    </location>
</feature>
<feature type="topological domain" description="Extracellular" evidence="3">
    <location>
        <begin position="22"/>
        <end position="340"/>
    </location>
</feature>
<feature type="transmembrane region" description="Helical" evidence="3">
    <location>
        <begin position="341"/>
        <end position="360"/>
    </location>
</feature>
<feature type="topological domain" description="Cytoplasmic" evidence="3">
    <location>
        <begin position="361"/>
        <end position="455"/>
    </location>
</feature>
<feature type="domain" description="Ig-like C2-type 1">
    <location>
        <begin position="42"/>
        <end position="102"/>
    </location>
</feature>
<feature type="domain" description="Ig-like C2-type 2">
    <location>
        <begin position="137"/>
        <end position="202"/>
    </location>
</feature>
<feature type="domain" description="Ig-like C2-type 3">
    <location>
        <begin position="237"/>
        <end position="300"/>
    </location>
</feature>
<feature type="glycosylation site" description="N-linked (GlcNAc...) asparagine" evidence="3">
    <location>
        <position position="179"/>
    </location>
</feature>
<feature type="glycosylation site" description="N-linked (GlcNAc...) asparagine" evidence="3">
    <location>
        <position position="239"/>
    </location>
</feature>
<feature type="glycosylation site" description="N-linked (GlcNAc...) asparagine" evidence="3">
    <location>
        <position position="273"/>
    </location>
</feature>
<feature type="glycosylation site" description="N-linked (GlcNAc...) asparagine" evidence="3">
    <location>
        <position position="306"/>
    </location>
</feature>
<feature type="disulfide bond" evidence="12">
    <location>
        <begin position="49"/>
        <end position="95"/>
    </location>
</feature>
<feature type="disulfide bond" evidence="2">
    <location>
        <begin position="144"/>
        <end position="195"/>
    </location>
</feature>
<feature type="disulfide bond" evidence="2">
    <location>
        <begin position="244"/>
        <end position="293"/>
    </location>
</feature>
<feature type="splice variant" id="VSP_047374" description="In isoform 2." evidence="11">
    <location>
        <begin position="318"/>
        <end position="334"/>
    </location>
</feature>
<feature type="sequence variant" id="VAR_010325" evidence="7 8">
    <original>P</original>
    <variation>A</variation>
    <location>
        <position position="40"/>
    </location>
</feature>
<feature type="sequence variant" id="VAR_010326" description="In dbSNP:rs3188286." evidence="7 8">
    <original>L</original>
    <variation>V</variation>
    <location>
        <position position="113"/>
    </location>
</feature>
<feature type="sequence variant" id="VAR_010327" description="In dbSNP:rs633870." evidence="7 8 9">
    <original>E</original>
    <variation>D</variation>
    <location>
        <position position="158"/>
    </location>
</feature>
<feature type="sequence variant" id="VAR_010328" description="In dbSNP:rs1048271." evidence="7 8">
    <original>R</original>
    <variation>H</variation>
    <location>
        <position position="166"/>
    </location>
</feature>
<feature type="sequence variant" id="VAR_010329" description="In dbSNP:rs1377032475." evidence="8">
    <original>A</original>
    <variation>P</variation>
    <location>
        <position position="228"/>
    </location>
</feature>
<feature type="sequence variant" id="VAR_010330" evidence="8">
    <original>I</original>
    <variation>T</variation>
    <location>
        <position position="252"/>
    </location>
</feature>
<feature type="sequence variant" id="VAR_049992" description="In dbSNP:rs3745902.">
    <original>T</original>
    <variation>M</variation>
    <location>
        <position position="397"/>
    </location>
</feature>
<feature type="sequence variant" id="VAR_049993" description="In dbSNP:rs3745903.">
    <original>K</original>
    <variation>Q</variation>
    <location>
        <position position="439"/>
    </location>
</feature>
<gene>
    <name evidence="10 13" type="primary">KIR3DL2</name>
    <name type="synonym">CD158K</name>
    <name type="synonym">NKAT4</name>
</gene>
<dbReference type="EMBL" id="L41270">
    <property type="protein sequence ID" value="AAA69871.1"/>
    <property type="molecule type" value="mRNA"/>
</dbReference>
<dbReference type="EMBL" id="U30272">
    <property type="protein sequence ID" value="AAB52520.1"/>
    <property type="molecule type" value="mRNA"/>
</dbReference>
<dbReference type="EMBL" id="X93595">
    <property type="protein sequence ID" value="CAA63791.1"/>
    <property type="molecule type" value="mRNA"/>
</dbReference>
<dbReference type="EMBL" id="X93596">
    <property type="protein sequence ID" value="CAA63792.1"/>
    <property type="molecule type" value="mRNA"/>
</dbReference>
<dbReference type="EMBL" id="X94373">
    <property type="protein sequence ID" value="CAA64150.1"/>
    <property type="molecule type" value="mRNA"/>
</dbReference>
<dbReference type="EMBL" id="X94374">
    <property type="protein sequence ID" value="CAA64151.1"/>
    <property type="molecule type" value="mRNA"/>
</dbReference>
<dbReference type="EMBL" id="L76665">
    <property type="protein sequence ID" value="AAB36593.1"/>
    <property type="molecule type" value="mRNA"/>
</dbReference>
<dbReference type="EMBL" id="L76666">
    <property type="protein sequence ID" value="AAB36594.1"/>
    <property type="molecule type" value="mRNA"/>
</dbReference>
<dbReference type="EMBL" id="AY789067">
    <property type="protein sequence ID" value="AAX23112.1"/>
    <property type="molecule type" value="mRNA"/>
</dbReference>
<dbReference type="CCDS" id="CCDS12906.1">
    <molecule id="P43630-1"/>
</dbReference>
<dbReference type="CCDS" id="CCDS58677.1">
    <molecule id="P43630-2"/>
</dbReference>
<dbReference type="RefSeq" id="NP_001229796.1">
    <molecule id="P43630-2"/>
    <property type="nucleotide sequence ID" value="NM_001242867.2"/>
</dbReference>
<dbReference type="RefSeq" id="NP_006728.2">
    <molecule id="P43630-1"/>
    <property type="nucleotide sequence ID" value="NM_006737.4"/>
</dbReference>
<dbReference type="SMR" id="P43630"/>
<dbReference type="BioGRID" id="110013">
    <property type="interactions" value="39"/>
</dbReference>
<dbReference type="ELM" id="P43630"/>
<dbReference type="FunCoup" id="P43630">
    <property type="interactions" value="262"/>
</dbReference>
<dbReference type="IntAct" id="P43630">
    <property type="interactions" value="24"/>
</dbReference>
<dbReference type="STRING" id="9606.ENSP00000325525"/>
<dbReference type="ChEMBL" id="CHEMBL4630895"/>
<dbReference type="GlyCosmos" id="P43630">
    <property type="glycosylation" value="4 sites, No reported glycans"/>
</dbReference>
<dbReference type="GlyGen" id="P43630">
    <property type="glycosylation" value="7 sites"/>
</dbReference>
<dbReference type="iPTMnet" id="P43630"/>
<dbReference type="PhosphoSitePlus" id="P43630"/>
<dbReference type="SwissPalm" id="P43630"/>
<dbReference type="BioMuta" id="KIR3DL2"/>
<dbReference type="DMDM" id="1171729"/>
<dbReference type="MassIVE" id="P43630"/>
<dbReference type="PaxDb" id="9606-ENSP00000325525"/>
<dbReference type="PeptideAtlas" id="P43630"/>
<dbReference type="ProteomicsDB" id="55644">
    <molecule id="P43630-1"/>
</dbReference>
<dbReference type="ABCD" id="P43630">
    <property type="antibodies" value="12 sequenced antibodies"/>
</dbReference>
<dbReference type="Antibodypedia" id="52684">
    <property type="antibodies" value="160 antibodies from 20 providers"/>
</dbReference>
<dbReference type="DNASU" id="3812"/>
<dbReference type="Ensembl" id="ENST00000270442.6">
    <molecule id="P43630-2"/>
    <property type="protein sequence ID" value="ENSP00000270442.5"/>
    <property type="gene ID" value="ENSG00000240403.6"/>
</dbReference>
<dbReference type="Ensembl" id="ENST00000326321.7">
    <molecule id="P43630-1"/>
    <property type="protein sequence ID" value="ENSP00000325525.3"/>
    <property type="gene ID" value="ENSG00000240403.6"/>
</dbReference>
<dbReference type="Ensembl" id="ENST00000611608.4">
    <molecule id="P43630-1"/>
    <property type="protein sequence ID" value="ENSP00000479903.1"/>
    <property type="gene ID" value="ENSG00000278809.4"/>
</dbReference>
<dbReference type="Ensembl" id="ENST00000611628.4">
    <property type="protein sequence ID" value="ENSP00000481662.1"/>
    <property type="gene ID" value="ENSG00000278474.4"/>
</dbReference>
<dbReference type="Ensembl" id="ENST00000611859.1">
    <molecule id="P43630-2"/>
    <property type="protein sequence ID" value="ENSP00000480578.1"/>
    <property type="gene ID" value="ENSG00000277181.4"/>
</dbReference>
<dbReference type="Ensembl" id="ENST00000612138.1">
    <molecule id="P43630-2"/>
    <property type="protein sequence ID" value="ENSP00000482589.1"/>
    <property type="gene ID" value="ENSG00000274722.4"/>
</dbReference>
<dbReference type="Ensembl" id="ENST00000613610.4">
    <property type="protein sequence ID" value="ENSP00000482301.1"/>
    <property type="gene ID" value="ENSG00000278442.4"/>
</dbReference>
<dbReference type="Ensembl" id="ENST00000613612.4">
    <property type="protein sequence ID" value="ENSP00000482565.1"/>
    <property type="gene ID" value="ENSG00000275566.4"/>
</dbReference>
<dbReference type="Ensembl" id="ENST00000614753.4">
    <property type="protein sequence ID" value="ENSP00000479299.1"/>
    <property type="gene ID" value="ENSG00000276357.4"/>
</dbReference>
<dbReference type="Ensembl" id="ENST00000617354.4">
    <molecule id="P43630-1"/>
    <property type="protein sequence ID" value="ENSP00000482110.1"/>
    <property type="gene ID" value="ENSG00000274722.4"/>
</dbReference>
<dbReference type="Ensembl" id="ENST00000617481.1">
    <molecule id="P43630-2"/>
    <property type="protein sequence ID" value="ENSP00000481306.1"/>
    <property type="gene ID" value="ENSG00000275083.4"/>
</dbReference>
<dbReference type="Ensembl" id="ENST00000617666.4">
    <property type="protein sequence ID" value="ENSP00000481209.1"/>
    <property type="gene ID" value="ENSG00000278361.4"/>
</dbReference>
<dbReference type="Ensembl" id="ENST00000617957.4">
    <molecule id="P43630-1"/>
    <property type="protein sequence ID" value="ENSP00000481579.1"/>
    <property type="gene ID" value="ENSG00000275083.4"/>
</dbReference>
<dbReference type="Ensembl" id="ENST00000618273.1">
    <molecule id="P43630-2"/>
    <property type="protein sequence ID" value="ENSP00000481871.1"/>
    <property type="gene ID" value="ENSG00000276739.4"/>
</dbReference>
<dbReference type="Ensembl" id="ENST00000619683.4">
    <property type="protein sequence ID" value="ENSP00000478251.1"/>
    <property type="gene ID" value="ENSG00000275626.4"/>
</dbReference>
<dbReference type="Ensembl" id="ENST00000620817.4">
    <molecule id="P43630-1"/>
    <property type="protein sequence ID" value="ENSP00000479772.1"/>
    <property type="gene ID" value="ENSG00000276739.4"/>
</dbReference>
<dbReference type="Ensembl" id="ENST00000621155.4">
    <property type="protein sequence ID" value="ENSP00000477519.1"/>
    <property type="gene ID" value="ENSG00000275416.4"/>
</dbReference>
<dbReference type="Ensembl" id="ENST00000622024.4">
    <property type="protein sequence ID" value="ENSP00000479425.1"/>
    <property type="gene ID" value="ENSG00000276004.4"/>
</dbReference>
<dbReference type="Ensembl" id="ENST00000622453.4">
    <molecule id="P43630-1"/>
    <property type="protein sequence ID" value="ENSP00000477516.1"/>
    <property type="gene ID" value="ENSG00000277181.4"/>
</dbReference>
<dbReference type="Ensembl" id="ENST00000622579.1">
    <molecule id="P43630-2"/>
    <property type="protein sequence ID" value="ENSP00000482655.1"/>
    <property type="gene ID" value="ENSG00000278809.4"/>
</dbReference>
<dbReference type="GeneID" id="3812"/>
<dbReference type="KEGG" id="hsa:3812"/>
<dbReference type="MANE-Select" id="ENST00000326321.7">
    <property type="protein sequence ID" value="ENSP00000325525.3"/>
    <property type="RefSeq nucleotide sequence ID" value="NM_006737.4"/>
    <property type="RefSeq protein sequence ID" value="NP_006728.2"/>
</dbReference>
<dbReference type="UCSC" id="uc002qho.5">
    <molecule id="P43630-1"/>
    <property type="organism name" value="human"/>
</dbReference>
<dbReference type="AGR" id="HGNC:6339"/>
<dbReference type="CTD" id="3812"/>
<dbReference type="DisGeNET" id="3812"/>
<dbReference type="GeneCards" id="KIR3DL2"/>
<dbReference type="HGNC" id="HGNC:6339">
    <property type="gene designation" value="KIR3DL2"/>
</dbReference>
<dbReference type="HPA" id="ENSG00000240403">
    <property type="expression patterns" value="Tissue enhanced (lymphoid)"/>
</dbReference>
<dbReference type="MIM" id="604947">
    <property type="type" value="gene"/>
</dbReference>
<dbReference type="neXtProt" id="NX_P43630"/>
<dbReference type="OpenTargets" id="ENSG00000240403"/>
<dbReference type="PharmGKB" id="PA30124"/>
<dbReference type="VEuPathDB" id="HostDB:ENSG00000240403"/>
<dbReference type="eggNOG" id="ENOG502RU21">
    <property type="taxonomic scope" value="Eukaryota"/>
</dbReference>
<dbReference type="GeneTree" id="ENSGT01100000263478"/>
<dbReference type="HOGENOM" id="CLU_021100_2_1_1"/>
<dbReference type="InParanoid" id="P43630"/>
<dbReference type="OMA" id="QNSFLMG"/>
<dbReference type="OrthoDB" id="9613897at2759"/>
<dbReference type="PAN-GO" id="P43630">
    <property type="GO annotations" value="1 GO annotation based on evolutionary models"/>
</dbReference>
<dbReference type="PhylomeDB" id="P43630"/>
<dbReference type="TreeFam" id="TF352669"/>
<dbReference type="PathwayCommons" id="P43630"/>
<dbReference type="Reactome" id="R-HSA-198933">
    <property type="pathway name" value="Immunoregulatory interactions between a Lymphoid and a non-Lymphoid cell"/>
</dbReference>
<dbReference type="SignaLink" id="P43630"/>
<dbReference type="BioGRID-ORCS" id="3812">
    <property type="hits" value="8 hits in 1129 CRISPR screens"/>
</dbReference>
<dbReference type="GeneWiki" id="KIR3DL2"/>
<dbReference type="GenomeRNAi" id="3812"/>
<dbReference type="Pharos" id="P43630">
    <property type="development level" value="Tbio"/>
</dbReference>
<dbReference type="PRO" id="PR:P43630"/>
<dbReference type="Proteomes" id="UP000005640">
    <property type="component" value="Chromosome 19"/>
</dbReference>
<dbReference type="RNAct" id="P43630">
    <property type="molecule type" value="protein"/>
</dbReference>
<dbReference type="Bgee" id="ENSG00000240403">
    <property type="expression patterns" value="Expressed in male germ line stem cell (sensu Vertebrata) in testis and 36 other cell types or tissues"/>
</dbReference>
<dbReference type="ExpressionAtlas" id="P43630">
    <property type="expression patterns" value="baseline and differential"/>
</dbReference>
<dbReference type="GO" id="GO:0005886">
    <property type="term" value="C:plasma membrane"/>
    <property type="evidence" value="ECO:0000318"/>
    <property type="project" value="GO_Central"/>
</dbReference>
<dbReference type="GO" id="GO:0023029">
    <property type="term" value="F:MHC class Ib protein binding"/>
    <property type="evidence" value="ECO:0000314"/>
    <property type="project" value="UniProtKB"/>
</dbReference>
<dbReference type="GO" id="GO:0006968">
    <property type="term" value="P:cellular defense response"/>
    <property type="evidence" value="ECO:0000304"/>
    <property type="project" value="ProtInc"/>
</dbReference>
<dbReference type="GO" id="GO:0002764">
    <property type="term" value="P:immune response-regulating signaling pathway"/>
    <property type="evidence" value="ECO:0000318"/>
    <property type="project" value="GO_Central"/>
</dbReference>
<dbReference type="CDD" id="cd05711">
    <property type="entry name" value="IgC2_D2_LILR_KIR_like"/>
    <property type="match status" value="2"/>
</dbReference>
<dbReference type="FunFam" id="2.60.40.10:FF:000033">
    <property type="entry name" value="Killer cell immunoglobulin-like receptor"/>
    <property type="match status" value="1"/>
</dbReference>
<dbReference type="FunFam" id="2.60.40.10:FF:000049">
    <property type="entry name" value="Leukocyte immunoglobulin-like receptor subfamily B member 1"/>
    <property type="match status" value="2"/>
</dbReference>
<dbReference type="Gene3D" id="2.60.40.10">
    <property type="entry name" value="Immunoglobulins"/>
    <property type="match status" value="3"/>
</dbReference>
<dbReference type="InterPro" id="IPR036179">
    <property type="entry name" value="Ig-like_dom_sf"/>
</dbReference>
<dbReference type="InterPro" id="IPR013783">
    <property type="entry name" value="Ig-like_fold"/>
</dbReference>
<dbReference type="InterPro" id="IPR050412">
    <property type="entry name" value="Ig-like_Receptors_ImmuneReg"/>
</dbReference>
<dbReference type="InterPro" id="IPR003599">
    <property type="entry name" value="Ig_sub"/>
</dbReference>
<dbReference type="InterPro" id="IPR013151">
    <property type="entry name" value="Immunoglobulin_dom"/>
</dbReference>
<dbReference type="PANTHER" id="PTHR11738:SF166">
    <property type="entry name" value="KILLER CELL IMMUNOGLOBULIN-LIKE RECEPTOR 3DL1-RELATED"/>
    <property type="match status" value="1"/>
</dbReference>
<dbReference type="PANTHER" id="PTHR11738">
    <property type="entry name" value="MHC CLASS I NK CELL RECEPTOR"/>
    <property type="match status" value="1"/>
</dbReference>
<dbReference type="Pfam" id="PF00047">
    <property type="entry name" value="ig"/>
    <property type="match status" value="3"/>
</dbReference>
<dbReference type="SMART" id="SM00409">
    <property type="entry name" value="IG"/>
    <property type="match status" value="3"/>
</dbReference>
<dbReference type="SUPFAM" id="SSF48726">
    <property type="entry name" value="Immunoglobulin"/>
    <property type="match status" value="3"/>
</dbReference>
<evidence type="ECO:0000250" key="1"/>
<evidence type="ECO:0000250" key="2">
    <source>
        <dbReference type="UniProtKB" id="Q8NHL6"/>
    </source>
</evidence>
<evidence type="ECO:0000255" key="3"/>
<evidence type="ECO:0000269" key="4">
    <source>
    </source>
</evidence>
<evidence type="ECO:0000269" key="5">
    <source>
    </source>
</evidence>
<evidence type="ECO:0000269" key="6">
    <source>
    </source>
</evidence>
<evidence type="ECO:0000269" key="7">
    <source>
    </source>
</evidence>
<evidence type="ECO:0000269" key="8">
    <source>
    </source>
</evidence>
<evidence type="ECO:0000269" key="9">
    <source ref="5"/>
</evidence>
<evidence type="ECO:0000303" key="10">
    <source>
    </source>
</evidence>
<evidence type="ECO:0000303" key="11">
    <source>
    </source>
</evidence>
<evidence type="ECO:0000305" key="12"/>
<evidence type="ECO:0000312" key="13">
    <source>
        <dbReference type="HGNC" id="HGNC:6339"/>
    </source>
</evidence>
<proteinExistence type="evidence at protein level"/>
<keyword id="KW-0025">Alternative splicing</keyword>
<keyword id="KW-1003">Cell membrane</keyword>
<keyword id="KW-1015">Disulfide bond</keyword>
<keyword id="KW-0325">Glycoprotein</keyword>
<keyword id="KW-0393">Immunoglobulin domain</keyword>
<keyword id="KW-0472">Membrane</keyword>
<keyword id="KW-1267">Proteomics identification</keyword>
<keyword id="KW-0675">Receptor</keyword>
<keyword id="KW-1185">Reference proteome</keyword>
<keyword id="KW-0677">Repeat</keyword>
<keyword id="KW-0732">Signal</keyword>
<keyword id="KW-0812">Transmembrane</keyword>
<keyword id="KW-1133">Transmembrane helix</keyword>